<feature type="chain" id="PRO_0000256573" description="Trigger factor">
    <location>
        <begin position="1"/>
        <end position="434"/>
    </location>
</feature>
<feature type="domain" description="PPIase FKBP-type" evidence="1">
    <location>
        <begin position="162"/>
        <end position="247"/>
    </location>
</feature>
<accession>Q1H1G1</accession>
<evidence type="ECO:0000255" key="1">
    <source>
        <dbReference type="HAMAP-Rule" id="MF_00303"/>
    </source>
</evidence>
<protein>
    <recommendedName>
        <fullName evidence="1">Trigger factor</fullName>
        <shortName evidence="1">TF</shortName>
        <ecNumber evidence="1">5.2.1.8</ecNumber>
    </recommendedName>
    <alternativeName>
        <fullName evidence="1">PPIase</fullName>
    </alternativeName>
</protein>
<dbReference type="EC" id="5.2.1.8" evidence="1"/>
<dbReference type="EMBL" id="CP000284">
    <property type="protein sequence ID" value="ABE49676.1"/>
    <property type="molecule type" value="Genomic_DNA"/>
</dbReference>
<dbReference type="RefSeq" id="WP_011479630.1">
    <property type="nucleotide sequence ID" value="NC_007947.1"/>
</dbReference>
<dbReference type="SMR" id="Q1H1G1"/>
<dbReference type="STRING" id="265072.Mfla_1408"/>
<dbReference type="KEGG" id="mfa:Mfla_1408"/>
<dbReference type="eggNOG" id="COG0544">
    <property type="taxonomic scope" value="Bacteria"/>
</dbReference>
<dbReference type="HOGENOM" id="CLU_033058_2_0_4"/>
<dbReference type="OrthoDB" id="9767721at2"/>
<dbReference type="Proteomes" id="UP000002440">
    <property type="component" value="Chromosome"/>
</dbReference>
<dbReference type="GO" id="GO:0005737">
    <property type="term" value="C:cytoplasm"/>
    <property type="evidence" value="ECO:0007669"/>
    <property type="project" value="UniProtKB-SubCell"/>
</dbReference>
<dbReference type="GO" id="GO:0003755">
    <property type="term" value="F:peptidyl-prolyl cis-trans isomerase activity"/>
    <property type="evidence" value="ECO:0007669"/>
    <property type="project" value="UniProtKB-UniRule"/>
</dbReference>
<dbReference type="GO" id="GO:0044183">
    <property type="term" value="F:protein folding chaperone"/>
    <property type="evidence" value="ECO:0007669"/>
    <property type="project" value="TreeGrafter"/>
</dbReference>
<dbReference type="GO" id="GO:0043022">
    <property type="term" value="F:ribosome binding"/>
    <property type="evidence" value="ECO:0007669"/>
    <property type="project" value="TreeGrafter"/>
</dbReference>
<dbReference type="GO" id="GO:0051083">
    <property type="term" value="P:'de novo' cotranslational protein folding"/>
    <property type="evidence" value="ECO:0007669"/>
    <property type="project" value="TreeGrafter"/>
</dbReference>
<dbReference type="GO" id="GO:0051301">
    <property type="term" value="P:cell division"/>
    <property type="evidence" value="ECO:0007669"/>
    <property type="project" value="UniProtKB-KW"/>
</dbReference>
<dbReference type="GO" id="GO:0061077">
    <property type="term" value="P:chaperone-mediated protein folding"/>
    <property type="evidence" value="ECO:0007669"/>
    <property type="project" value="TreeGrafter"/>
</dbReference>
<dbReference type="GO" id="GO:0015031">
    <property type="term" value="P:protein transport"/>
    <property type="evidence" value="ECO:0007669"/>
    <property type="project" value="UniProtKB-UniRule"/>
</dbReference>
<dbReference type="GO" id="GO:0043335">
    <property type="term" value="P:protein unfolding"/>
    <property type="evidence" value="ECO:0007669"/>
    <property type="project" value="TreeGrafter"/>
</dbReference>
<dbReference type="Gene3D" id="3.10.50.40">
    <property type="match status" value="1"/>
</dbReference>
<dbReference type="Gene3D" id="3.30.70.1050">
    <property type="entry name" value="Trigger factor ribosome-binding domain"/>
    <property type="match status" value="1"/>
</dbReference>
<dbReference type="Gene3D" id="1.10.3120.10">
    <property type="entry name" value="Trigger factor, C-terminal domain"/>
    <property type="match status" value="1"/>
</dbReference>
<dbReference type="HAMAP" id="MF_00303">
    <property type="entry name" value="Trigger_factor_Tig"/>
    <property type="match status" value="1"/>
</dbReference>
<dbReference type="InterPro" id="IPR046357">
    <property type="entry name" value="PPIase_dom_sf"/>
</dbReference>
<dbReference type="InterPro" id="IPR001179">
    <property type="entry name" value="PPIase_FKBP_dom"/>
</dbReference>
<dbReference type="InterPro" id="IPR005215">
    <property type="entry name" value="Trig_fac"/>
</dbReference>
<dbReference type="InterPro" id="IPR008880">
    <property type="entry name" value="Trigger_fac_C"/>
</dbReference>
<dbReference type="InterPro" id="IPR037041">
    <property type="entry name" value="Trigger_fac_C_sf"/>
</dbReference>
<dbReference type="InterPro" id="IPR008881">
    <property type="entry name" value="Trigger_fac_ribosome-bd_bac"/>
</dbReference>
<dbReference type="InterPro" id="IPR036611">
    <property type="entry name" value="Trigger_fac_ribosome-bd_sf"/>
</dbReference>
<dbReference type="InterPro" id="IPR027304">
    <property type="entry name" value="Trigger_fact/SurA_dom_sf"/>
</dbReference>
<dbReference type="NCBIfam" id="TIGR00115">
    <property type="entry name" value="tig"/>
    <property type="match status" value="1"/>
</dbReference>
<dbReference type="PANTHER" id="PTHR30560">
    <property type="entry name" value="TRIGGER FACTOR CHAPERONE AND PEPTIDYL-PROLYL CIS/TRANS ISOMERASE"/>
    <property type="match status" value="1"/>
</dbReference>
<dbReference type="PANTHER" id="PTHR30560:SF3">
    <property type="entry name" value="TRIGGER FACTOR-LIKE PROTEIN TIG, CHLOROPLASTIC"/>
    <property type="match status" value="1"/>
</dbReference>
<dbReference type="Pfam" id="PF00254">
    <property type="entry name" value="FKBP_C"/>
    <property type="match status" value="1"/>
</dbReference>
<dbReference type="Pfam" id="PF05698">
    <property type="entry name" value="Trigger_C"/>
    <property type="match status" value="1"/>
</dbReference>
<dbReference type="Pfam" id="PF05697">
    <property type="entry name" value="Trigger_N"/>
    <property type="match status" value="1"/>
</dbReference>
<dbReference type="PIRSF" id="PIRSF003095">
    <property type="entry name" value="Trigger_factor"/>
    <property type="match status" value="1"/>
</dbReference>
<dbReference type="SUPFAM" id="SSF54534">
    <property type="entry name" value="FKBP-like"/>
    <property type="match status" value="1"/>
</dbReference>
<dbReference type="SUPFAM" id="SSF109998">
    <property type="entry name" value="Triger factor/SurA peptide-binding domain-like"/>
    <property type="match status" value="1"/>
</dbReference>
<dbReference type="SUPFAM" id="SSF102735">
    <property type="entry name" value="Trigger factor ribosome-binding domain"/>
    <property type="match status" value="1"/>
</dbReference>
<reference key="1">
    <citation type="submission" date="2006-03" db="EMBL/GenBank/DDBJ databases">
        <title>Complete sequence of Methylobacillus flagellatus KT.</title>
        <authorList>
            <consortium name="US DOE Joint Genome Institute"/>
            <person name="Copeland A."/>
            <person name="Lucas S."/>
            <person name="Lapidus A."/>
            <person name="Barry K."/>
            <person name="Detter J.C."/>
            <person name="Glavina del Rio T."/>
            <person name="Hammon N."/>
            <person name="Israni S."/>
            <person name="Dalin E."/>
            <person name="Tice H."/>
            <person name="Pitluck S."/>
            <person name="Brettin T."/>
            <person name="Bruce D."/>
            <person name="Han C."/>
            <person name="Tapia R."/>
            <person name="Saunders E."/>
            <person name="Gilna P."/>
            <person name="Schmutz J."/>
            <person name="Larimer F."/>
            <person name="Land M."/>
            <person name="Kyrpides N."/>
            <person name="Anderson I."/>
            <person name="Richardson P."/>
        </authorList>
    </citation>
    <scope>NUCLEOTIDE SEQUENCE [LARGE SCALE GENOMIC DNA]</scope>
    <source>
        <strain>ATCC 51484 / DSM 6875 / VKM B-1610 / KT</strain>
    </source>
</reference>
<gene>
    <name evidence="1" type="primary">tig</name>
    <name type="ordered locus">Mfla_1408</name>
</gene>
<organism>
    <name type="scientific">Methylobacillus flagellatus (strain ATCC 51484 / DSM 6875 / VKM B-1610 / KT)</name>
    <dbReference type="NCBI Taxonomy" id="265072"/>
    <lineage>
        <taxon>Bacteria</taxon>
        <taxon>Pseudomonadati</taxon>
        <taxon>Pseudomonadota</taxon>
        <taxon>Betaproteobacteria</taxon>
        <taxon>Nitrosomonadales</taxon>
        <taxon>Methylophilaceae</taxon>
        <taxon>Methylobacillus</taxon>
    </lineage>
</organism>
<keyword id="KW-0131">Cell cycle</keyword>
<keyword id="KW-0132">Cell division</keyword>
<keyword id="KW-0143">Chaperone</keyword>
<keyword id="KW-0963">Cytoplasm</keyword>
<keyword id="KW-0413">Isomerase</keyword>
<keyword id="KW-1185">Reference proteome</keyword>
<keyword id="KW-0697">Rotamase</keyword>
<proteinExistence type="inferred from homology"/>
<sequence length="434" mass="48970">MQATVETISNLERRMTVSVPVQPLESEVNERINRLARTVKMPGFRPGKVPLNIVRQQYGAQVRNEVLSNAVERSFSDAVEQNKLRVAGYPHIEHKPYAENDPQIEYVATFEVFPEVNIGDLSKAKIERPVLEVGEAEVKKTIDVLLRQRATFEPVKRASKKGDKINISLIAYIDDQEVERTDENGLDLIIGEGGRFPAFESELSGNKAGSNKVFEIAYPEDHKPEQLAGKTVRYDVTFNTVEQAKLPEFDADFARSLGVEDGDVEKMREEITASLKQEVEKRIRVKLKEQAFQALLDNTALEVPKAFINAEVGRLIQSTQDNLKQRGVDLANVNLEPALFEEQATRNASLRLILSELVNRENLQANAEQVRNMVNVFAQSFERPDDVVTWYYADTKRLDEPAALATEDNVVEWVLKSANVVDKKVKFDDLMGNS</sequence>
<comment type="function">
    <text evidence="1">Involved in protein export. Acts as a chaperone by maintaining the newly synthesized protein in an open conformation. Functions as a peptidyl-prolyl cis-trans isomerase.</text>
</comment>
<comment type="catalytic activity">
    <reaction evidence="1">
        <text>[protein]-peptidylproline (omega=180) = [protein]-peptidylproline (omega=0)</text>
        <dbReference type="Rhea" id="RHEA:16237"/>
        <dbReference type="Rhea" id="RHEA-COMP:10747"/>
        <dbReference type="Rhea" id="RHEA-COMP:10748"/>
        <dbReference type="ChEBI" id="CHEBI:83833"/>
        <dbReference type="ChEBI" id="CHEBI:83834"/>
        <dbReference type="EC" id="5.2.1.8"/>
    </reaction>
</comment>
<comment type="subcellular location">
    <subcellularLocation>
        <location>Cytoplasm</location>
    </subcellularLocation>
    <text evidence="1">About half TF is bound to the ribosome near the polypeptide exit tunnel while the other half is free in the cytoplasm.</text>
</comment>
<comment type="domain">
    <text evidence="1">Consists of 3 domains; the N-terminus binds the ribosome, the middle domain has PPIase activity, while the C-terminus has intrinsic chaperone activity on its own.</text>
</comment>
<comment type="similarity">
    <text evidence="1">Belongs to the FKBP-type PPIase family. Tig subfamily.</text>
</comment>
<name>TIG_METFK</name>